<accession>Q5FTX4</accession>
<name>RL1_GLUOX</name>
<keyword id="KW-1185">Reference proteome</keyword>
<keyword id="KW-0678">Repressor</keyword>
<keyword id="KW-0687">Ribonucleoprotein</keyword>
<keyword id="KW-0689">Ribosomal protein</keyword>
<keyword id="KW-0694">RNA-binding</keyword>
<keyword id="KW-0699">rRNA-binding</keyword>
<keyword id="KW-0810">Translation regulation</keyword>
<keyword id="KW-0820">tRNA-binding</keyword>
<reference key="1">
    <citation type="journal article" date="2005" name="Nat. Biotechnol.">
        <title>Complete genome sequence of the acetic acid bacterium Gluconobacter oxydans.</title>
        <authorList>
            <person name="Prust C."/>
            <person name="Hoffmeister M."/>
            <person name="Liesegang H."/>
            <person name="Wiezer A."/>
            <person name="Fricke W.F."/>
            <person name="Ehrenreich A."/>
            <person name="Gottschalk G."/>
            <person name="Deppenmeier U."/>
        </authorList>
    </citation>
    <scope>NUCLEOTIDE SEQUENCE [LARGE SCALE GENOMIC DNA]</scope>
    <source>
        <strain>621H</strain>
    </source>
</reference>
<organism>
    <name type="scientific">Gluconobacter oxydans (strain 621H)</name>
    <name type="common">Gluconobacter suboxydans</name>
    <dbReference type="NCBI Taxonomy" id="290633"/>
    <lineage>
        <taxon>Bacteria</taxon>
        <taxon>Pseudomonadati</taxon>
        <taxon>Pseudomonadota</taxon>
        <taxon>Alphaproteobacteria</taxon>
        <taxon>Acetobacterales</taxon>
        <taxon>Acetobacteraceae</taxon>
        <taxon>Gluconobacter</taxon>
    </lineage>
</organism>
<evidence type="ECO:0000255" key="1">
    <source>
        <dbReference type="HAMAP-Rule" id="MF_01318"/>
    </source>
</evidence>
<evidence type="ECO:0000305" key="2"/>
<protein>
    <recommendedName>
        <fullName evidence="1">Large ribosomal subunit protein uL1</fullName>
    </recommendedName>
    <alternativeName>
        <fullName evidence="2">50S ribosomal protein L1</fullName>
    </alternativeName>
</protein>
<gene>
    <name evidence="1" type="primary">rplA</name>
    <name type="ordered locus">GOX0389</name>
</gene>
<comment type="function">
    <text evidence="1">Binds directly to 23S rRNA. The L1 stalk is quite mobile in the ribosome, and is involved in E site tRNA release.</text>
</comment>
<comment type="function">
    <text evidence="1">Protein L1 is also a translational repressor protein, it controls the translation of the L11 operon by binding to its mRNA.</text>
</comment>
<comment type="subunit">
    <text evidence="1">Part of the 50S ribosomal subunit.</text>
</comment>
<comment type="similarity">
    <text evidence="1">Belongs to the universal ribosomal protein uL1 family.</text>
</comment>
<sequence>MAKNKRLTAAQATVERNKPYGLSEAVALVKSNAKAKFDETIEISLNLGIDPRHADQMVRGLISLPNGTGKTLRVGVFARGPKAEEALAAGAEVVGAEDLAEKIQAGEIDFDRCIATPDMMALVGRLGKILGPRGLMPNPRLGTVTMDVKGAITAAKSGQVEYRAEKAGIIHAGVGKASFDEAKLVENINALVDAVQKARPTGAKGTYLKKAALSSTMGPGVRVDVASFEA</sequence>
<proteinExistence type="inferred from homology"/>
<feature type="chain" id="PRO_0000230609" description="Large ribosomal subunit protein uL1">
    <location>
        <begin position="1"/>
        <end position="230"/>
    </location>
</feature>
<dbReference type="EMBL" id="CP000009">
    <property type="protein sequence ID" value="AAW60172.1"/>
    <property type="molecule type" value="Genomic_DNA"/>
</dbReference>
<dbReference type="RefSeq" id="WP_011251974.1">
    <property type="nucleotide sequence ID" value="NZ_LT900338.1"/>
</dbReference>
<dbReference type="SMR" id="Q5FTX4"/>
<dbReference type="STRING" id="290633.GOX0389"/>
<dbReference type="GeneID" id="56904655"/>
<dbReference type="KEGG" id="gox:GOX0389"/>
<dbReference type="eggNOG" id="COG0081">
    <property type="taxonomic scope" value="Bacteria"/>
</dbReference>
<dbReference type="HOGENOM" id="CLU_062853_0_0_5"/>
<dbReference type="Proteomes" id="UP000006375">
    <property type="component" value="Chromosome"/>
</dbReference>
<dbReference type="GO" id="GO:0022625">
    <property type="term" value="C:cytosolic large ribosomal subunit"/>
    <property type="evidence" value="ECO:0007669"/>
    <property type="project" value="TreeGrafter"/>
</dbReference>
<dbReference type="GO" id="GO:0019843">
    <property type="term" value="F:rRNA binding"/>
    <property type="evidence" value="ECO:0007669"/>
    <property type="project" value="UniProtKB-UniRule"/>
</dbReference>
<dbReference type="GO" id="GO:0003735">
    <property type="term" value="F:structural constituent of ribosome"/>
    <property type="evidence" value="ECO:0007669"/>
    <property type="project" value="InterPro"/>
</dbReference>
<dbReference type="GO" id="GO:0000049">
    <property type="term" value="F:tRNA binding"/>
    <property type="evidence" value="ECO:0007669"/>
    <property type="project" value="UniProtKB-KW"/>
</dbReference>
<dbReference type="GO" id="GO:0006417">
    <property type="term" value="P:regulation of translation"/>
    <property type="evidence" value="ECO:0007669"/>
    <property type="project" value="UniProtKB-KW"/>
</dbReference>
<dbReference type="GO" id="GO:0006412">
    <property type="term" value="P:translation"/>
    <property type="evidence" value="ECO:0007669"/>
    <property type="project" value="UniProtKB-UniRule"/>
</dbReference>
<dbReference type="CDD" id="cd00403">
    <property type="entry name" value="Ribosomal_L1"/>
    <property type="match status" value="1"/>
</dbReference>
<dbReference type="FunFam" id="3.40.50.790:FF:000001">
    <property type="entry name" value="50S ribosomal protein L1"/>
    <property type="match status" value="1"/>
</dbReference>
<dbReference type="Gene3D" id="3.30.190.20">
    <property type="match status" value="1"/>
</dbReference>
<dbReference type="Gene3D" id="3.40.50.790">
    <property type="match status" value="1"/>
</dbReference>
<dbReference type="HAMAP" id="MF_01318_B">
    <property type="entry name" value="Ribosomal_uL1_B"/>
    <property type="match status" value="1"/>
</dbReference>
<dbReference type="InterPro" id="IPR005878">
    <property type="entry name" value="Ribosom_uL1_bac-type"/>
</dbReference>
<dbReference type="InterPro" id="IPR002143">
    <property type="entry name" value="Ribosomal_uL1"/>
</dbReference>
<dbReference type="InterPro" id="IPR023674">
    <property type="entry name" value="Ribosomal_uL1-like"/>
</dbReference>
<dbReference type="InterPro" id="IPR028364">
    <property type="entry name" value="Ribosomal_uL1/biogenesis"/>
</dbReference>
<dbReference type="InterPro" id="IPR016095">
    <property type="entry name" value="Ribosomal_uL1_3-a/b-sand"/>
</dbReference>
<dbReference type="InterPro" id="IPR023673">
    <property type="entry name" value="Ribosomal_uL1_CS"/>
</dbReference>
<dbReference type="NCBIfam" id="TIGR01169">
    <property type="entry name" value="rplA_bact"/>
    <property type="match status" value="1"/>
</dbReference>
<dbReference type="PANTHER" id="PTHR36427">
    <property type="entry name" value="54S RIBOSOMAL PROTEIN L1, MITOCHONDRIAL"/>
    <property type="match status" value="1"/>
</dbReference>
<dbReference type="PANTHER" id="PTHR36427:SF3">
    <property type="entry name" value="LARGE RIBOSOMAL SUBUNIT PROTEIN UL1M"/>
    <property type="match status" value="1"/>
</dbReference>
<dbReference type="Pfam" id="PF00687">
    <property type="entry name" value="Ribosomal_L1"/>
    <property type="match status" value="1"/>
</dbReference>
<dbReference type="PIRSF" id="PIRSF002155">
    <property type="entry name" value="Ribosomal_L1"/>
    <property type="match status" value="1"/>
</dbReference>
<dbReference type="SUPFAM" id="SSF56808">
    <property type="entry name" value="Ribosomal protein L1"/>
    <property type="match status" value="1"/>
</dbReference>
<dbReference type="PROSITE" id="PS01199">
    <property type="entry name" value="RIBOSOMAL_L1"/>
    <property type="match status" value="1"/>
</dbReference>